<reference key="1">
    <citation type="journal article" date="2005" name="BMC Biol.">
        <title>The complete chloroplast DNA sequences of the charophycean green algae Staurastrum and Zygnema reveal that the chloroplast genome underwent extensive changes during the evolution of the Zygnematales.</title>
        <authorList>
            <person name="Turmel M."/>
            <person name="Otis C."/>
            <person name="Lemieux C."/>
        </authorList>
    </citation>
    <scope>NUCLEOTIDE SEQUENCE [LARGE SCALE GENOMIC DNA]</scope>
</reference>
<protein>
    <recommendedName>
        <fullName evidence="1">Large ribosomal subunit protein bL21c</fullName>
    </recommendedName>
    <alternativeName>
        <fullName evidence="2">50S ribosomal protein L21, chloroplastic</fullName>
    </alternativeName>
</protein>
<organism>
    <name type="scientific">Zygnema circumcarinatum</name>
    <name type="common">Green alga</name>
    <dbReference type="NCBI Taxonomy" id="35869"/>
    <lineage>
        <taxon>Eukaryota</taxon>
        <taxon>Viridiplantae</taxon>
        <taxon>Streptophyta</taxon>
        <taxon>Zygnematophyceae</taxon>
        <taxon>Zygnematophycidae</taxon>
        <taxon>Zygnematales</taxon>
        <taxon>Zygnemataceae</taxon>
        <taxon>Zygnema</taxon>
    </lineage>
</organism>
<proteinExistence type="inferred from homology"/>
<evidence type="ECO:0000255" key="1">
    <source>
        <dbReference type="HAMAP-Rule" id="MF_01363"/>
    </source>
</evidence>
<evidence type="ECO:0000305" key="2"/>
<sequence>MKTYAIIEAGGEQLQVEPGRFYNIRHLSLRGVNFWGQNTKLLLYRVLMIRHQSATVLGNPWVQNATVKGRILDARRDDKLVIYKMRAKKKTRRKRGHRQGLTRFVVDAICLNGKVLLD</sequence>
<dbReference type="EMBL" id="AY958086">
    <property type="protein sequence ID" value="AAX45856.1"/>
    <property type="molecule type" value="Genomic_DNA"/>
</dbReference>
<dbReference type="RefSeq" id="YP_636568.1">
    <property type="nucleotide sequence ID" value="NC_008117.1"/>
</dbReference>
<dbReference type="SMR" id="Q32RF8"/>
<dbReference type="GeneID" id="4108176"/>
<dbReference type="GO" id="GO:0009507">
    <property type="term" value="C:chloroplast"/>
    <property type="evidence" value="ECO:0007669"/>
    <property type="project" value="UniProtKB-SubCell"/>
</dbReference>
<dbReference type="GO" id="GO:1990904">
    <property type="term" value="C:ribonucleoprotein complex"/>
    <property type="evidence" value="ECO:0007669"/>
    <property type="project" value="UniProtKB-KW"/>
</dbReference>
<dbReference type="GO" id="GO:0005840">
    <property type="term" value="C:ribosome"/>
    <property type="evidence" value="ECO:0007669"/>
    <property type="project" value="UniProtKB-KW"/>
</dbReference>
<dbReference type="GO" id="GO:0019843">
    <property type="term" value="F:rRNA binding"/>
    <property type="evidence" value="ECO:0007669"/>
    <property type="project" value="UniProtKB-UniRule"/>
</dbReference>
<dbReference type="GO" id="GO:0003735">
    <property type="term" value="F:structural constituent of ribosome"/>
    <property type="evidence" value="ECO:0007669"/>
    <property type="project" value="InterPro"/>
</dbReference>
<dbReference type="GO" id="GO:0006412">
    <property type="term" value="P:translation"/>
    <property type="evidence" value="ECO:0007669"/>
    <property type="project" value="UniProtKB-UniRule"/>
</dbReference>
<dbReference type="HAMAP" id="MF_01363">
    <property type="entry name" value="Ribosomal_bL21"/>
    <property type="match status" value="1"/>
</dbReference>
<dbReference type="InterPro" id="IPR028909">
    <property type="entry name" value="bL21-like"/>
</dbReference>
<dbReference type="InterPro" id="IPR036164">
    <property type="entry name" value="bL21-like_sf"/>
</dbReference>
<dbReference type="InterPro" id="IPR001787">
    <property type="entry name" value="Ribosomal_bL21"/>
</dbReference>
<dbReference type="InterPro" id="IPR018258">
    <property type="entry name" value="Ribosomal_bL21_CS"/>
</dbReference>
<dbReference type="NCBIfam" id="TIGR00061">
    <property type="entry name" value="L21"/>
    <property type="match status" value="1"/>
</dbReference>
<dbReference type="PANTHER" id="PTHR21349">
    <property type="entry name" value="50S RIBOSOMAL PROTEIN L21"/>
    <property type="match status" value="1"/>
</dbReference>
<dbReference type="PANTHER" id="PTHR21349:SF0">
    <property type="entry name" value="LARGE RIBOSOMAL SUBUNIT PROTEIN BL21M"/>
    <property type="match status" value="1"/>
</dbReference>
<dbReference type="Pfam" id="PF00829">
    <property type="entry name" value="Ribosomal_L21p"/>
    <property type="match status" value="1"/>
</dbReference>
<dbReference type="SUPFAM" id="SSF141091">
    <property type="entry name" value="L21p-like"/>
    <property type="match status" value="1"/>
</dbReference>
<dbReference type="PROSITE" id="PS01169">
    <property type="entry name" value="RIBOSOMAL_L21"/>
    <property type="match status" value="1"/>
</dbReference>
<feature type="chain" id="PRO_0000269451" description="Large ribosomal subunit protein bL21c">
    <location>
        <begin position="1"/>
        <end position="118"/>
    </location>
</feature>
<accession>Q32RF8</accession>
<comment type="function">
    <text evidence="1">This protein binds to 23S rRNA.</text>
</comment>
<comment type="subunit">
    <text evidence="1">Part of the 50S ribosomal subunit.</text>
</comment>
<comment type="subcellular location">
    <subcellularLocation>
        <location>Plastid</location>
        <location>Chloroplast</location>
    </subcellularLocation>
</comment>
<comment type="similarity">
    <text evidence="1">Belongs to the bacterial ribosomal protein bL21 family.</text>
</comment>
<keyword id="KW-0150">Chloroplast</keyword>
<keyword id="KW-0934">Plastid</keyword>
<keyword id="KW-0687">Ribonucleoprotein</keyword>
<keyword id="KW-0689">Ribosomal protein</keyword>
<keyword id="KW-0694">RNA-binding</keyword>
<keyword id="KW-0699">rRNA-binding</keyword>
<gene>
    <name evidence="1" type="primary">rpl21</name>
</gene>
<geneLocation type="chloroplast"/>
<name>RK21_ZYGCR</name>